<gene>
    <name evidence="1" type="primary">rpmA</name>
    <name type="ordered locus">AZOSEA04440</name>
    <name type="ORF">ebC2</name>
</gene>
<protein>
    <recommendedName>
        <fullName evidence="1">Large ribosomal subunit protein bL27</fullName>
    </recommendedName>
    <alternativeName>
        <fullName evidence="3">50S ribosomal protein L27</fullName>
    </alternativeName>
</protein>
<keyword id="KW-1185">Reference proteome</keyword>
<keyword id="KW-0687">Ribonucleoprotein</keyword>
<keyword id="KW-0689">Ribosomal protein</keyword>
<feature type="chain" id="PRO_0000181033" description="Large ribosomal subunit protein bL27">
    <location>
        <begin position="1"/>
        <end position="87"/>
    </location>
</feature>
<feature type="region of interest" description="Disordered" evidence="2">
    <location>
        <begin position="1"/>
        <end position="21"/>
    </location>
</feature>
<sequence>MAHKKAGGSSRNGRDSESKRLGVKRYGGQFVLAGNIIVRQRGTEYHPGENVGIGKDHTLFALKDGTVQFTIKGAQRRRTVVIVPEAA</sequence>
<reference key="1">
    <citation type="journal article" date="2005" name="Arch. Microbiol.">
        <title>The genome sequence of an anaerobic aromatic-degrading denitrifying bacterium, strain EbN1.</title>
        <authorList>
            <person name="Rabus R."/>
            <person name="Kube M."/>
            <person name="Heider J."/>
            <person name="Beck A."/>
            <person name="Heitmann K."/>
            <person name="Widdel F."/>
            <person name="Reinhardt R."/>
        </authorList>
    </citation>
    <scope>NUCLEOTIDE SEQUENCE [LARGE SCALE GENOMIC DNA]</scope>
    <source>
        <strain>DSM 19018 / LMG 30748 / EbN1</strain>
    </source>
</reference>
<organism>
    <name type="scientific">Aromatoleum aromaticum (strain DSM 19018 / LMG 30748 / EbN1)</name>
    <name type="common">Azoarcus sp. (strain EbN1)</name>
    <dbReference type="NCBI Taxonomy" id="76114"/>
    <lineage>
        <taxon>Bacteria</taxon>
        <taxon>Pseudomonadati</taxon>
        <taxon>Pseudomonadota</taxon>
        <taxon>Betaproteobacteria</taxon>
        <taxon>Rhodocyclales</taxon>
        <taxon>Rhodocyclaceae</taxon>
        <taxon>Aromatoleum</taxon>
    </lineage>
</organism>
<proteinExistence type="inferred from homology"/>
<accession>Q5P7Z5</accession>
<dbReference type="EMBL" id="CR555306">
    <property type="protein sequence ID" value="CAI06566.1"/>
    <property type="molecule type" value="Genomic_DNA"/>
</dbReference>
<dbReference type="RefSeq" id="WP_011236299.1">
    <property type="nucleotide sequence ID" value="NC_006513.1"/>
</dbReference>
<dbReference type="SMR" id="Q5P7Z5"/>
<dbReference type="STRING" id="76114.ebC2"/>
<dbReference type="KEGG" id="eba:ebC2"/>
<dbReference type="eggNOG" id="COG0211">
    <property type="taxonomic scope" value="Bacteria"/>
</dbReference>
<dbReference type="HOGENOM" id="CLU_095424_4_1_4"/>
<dbReference type="OrthoDB" id="9803474at2"/>
<dbReference type="Proteomes" id="UP000006552">
    <property type="component" value="Chromosome"/>
</dbReference>
<dbReference type="GO" id="GO:0022625">
    <property type="term" value="C:cytosolic large ribosomal subunit"/>
    <property type="evidence" value="ECO:0007669"/>
    <property type="project" value="TreeGrafter"/>
</dbReference>
<dbReference type="GO" id="GO:0003735">
    <property type="term" value="F:structural constituent of ribosome"/>
    <property type="evidence" value="ECO:0007669"/>
    <property type="project" value="InterPro"/>
</dbReference>
<dbReference type="GO" id="GO:0006412">
    <property type="term" value="P:translation"/>
    <property type="evidence" value="ECO:0007669"/>
    <property type="project" value="UniProtKB-UniRule"/>
</dbReference>
<dbReference type="FunFam" id="2.40.50.100:FF:000001">
    <property type="entry name" value="50S ribosomal protein L27"/>
    <property type="match status" value="1"/>
</dbReference>
<dbReference type="Gene3D" id="2.40.50.100">
    <property type="match status" value="1"/>
</dbReference>
<dbReference type="HAMAP" id="MF_00539">
    <property type="entry name" value="Ribosomal_bL27"/>
    <property type="match status" value="1"/>
</dbReference>
<dbReference type="InterPro" id="IPR001684">
    <property type="entry name" value="Ribosomal_bL27"/>
</dbReference>
<dbReference type="InterPro" id="IPR018261">
    <property type="entry name" value="Ribosomal_bL27_CS"/>
</dbReference>
<dbReference type="NCBIfam" id="TIGR00062">
    <property type="entry name" value="L27"/>
    <property type="match status" value="1"/>
</dbReference>
<dbReference type="PANTHER" id="PTHR15893:SF0">
    <property type="entry name" value="LARGE RIBOSOMAL SUBUNIT PROTEIN BL27M"/>
    <property type="match status" value="1"/>
</dbReference>
<dbReference type="PANTHER" id="PTHR15893">
    <property type="entry name" value="RIBOSOMAL PROTEIN L27"/>
    <property type="match status" value="1"/>
</dbReference>
<dbReference type="Pfam" id="PF01016">
    <property type="entry name" value="Ribosomal_L27"/>
    <property type="match status" value="1"/>
</dbReference>
<dbReference type="PRINTS" id="PR00063">
    <property type="entry name" value="RIBOSOMALL27"/>
</dbReference>
<dbReference type="SUPFAM" id="SSF110324">
    <property type="entry name" value="Ribosomal L27 protein-like"/>
    <property type="match status" value="1"/>
</dbReference>
<dbReference type="PROSITE" id="PS00831">
    <property type="entry name" value="RIBOSOMAL_L27"/>
    <property type="match status" value="1"/>
</dbReference>
<name>RL27_AROAE</name>
<comment type="similarity">
    <text evidence="1">Belongs to the bacterial ribosomal protein bL27 family.</text>
</comment>
<evidence type="ECO:0000255" key="1">
    <source>
        <dbReference type="HAMAP-Rule" id="MF_00539"/>
    </source>
</evidence>
<evidence type="ECO:0000256" key="2">
    <source>
        <dbReference type="SAM" id="MobiDB-lite"/>
    </source>
</evidence>
<evidence type="ECO:0000305" key="3"/>